<name>HS23C_OXYRB</name>
<reference key="1">
    <citation type="journal article" date="1989" name="Nucleic Acids Res.">
        <title>cDNA sequence of a heat-inducible protein of Chenopodium sharing little homology with other heat-shock proteins.</title>
        <authorList>
            <person name="Knack G."/>
            <person name="Kloppstech K."/>
        </authorList>
    </citation>
    <scope>NUCLEOTIDE SEQUENCE [MRNA]</scope>
</reference>
<reference key="2">
    <citation type="journal article" date="1992" name="Eur. J. Cell Biol.">
        <title>Low molecular mass heat-shock proteins of a light-resistant photoautotrophic cell culture.</title>
        <authorList>
            <person name="Knack G."/>
            <person name="Liu Z."/>
            <person name="Kloppstech K."/>
        </authorList>
    </citation>
    <scope>NUCLEOTIDE SEQUENCE [MRNA]</scope>
</reference>
<comment type="subcellular location">
    <subcellularLocation>
        <location>Plastid</location>
        <location>Chloroplast stroma</location>
    </subcellularLocation>
</comment>
<comment type="similarity">
    <text evidence="2">Belongs to the small heat shock protein (HSP20) family.</text>
</comment>
<gene>
    <name type="primary">HSP23</name>
</gene>
<feature type="transit peptide" description="Chloroplast" evidence="1">
    <location>
        <begin position="1"/>
        <end status="unknown"/>
    </location>
</feature>
<feature type="chain" id="PRO_0000013530" description="Small heat shock protein, chloroplastic">
    <location>
        <begin status="unknown"/>
        <end position="204"/>
    </location>
</feature>
<feature type="domain" description="sHSP" evidence="2">
    <location>
        <begin position="98"/>
        <end position="204"/>
    </location>
</feature>
<feature type="region of interest" description="Disordered" evidence="3">
    <location>
        <begin position="34"/>
        <end position="55"/>
    </location>
</feature>
<feature type="compositionally biased region" description="Basic and acidic residues" evidence="3">
    <location>
        <begin position="37"/>
        <end position="49"/>
    </location>
</feature>
<evidence type="ECO:0000255" key="1"/>
<evidence type="ECO:0000255" key="2">
    <source>
        <dbReference type="PROSITE-ProRule" id="PRU00285"/>
    </source>
</evidence>
<evidence type="ECO:0000256" key="3">
    <source>
        <dbReference type="SAM" id="MobiDB-lite"/>
    </source>
</evidence>
<accession>P11890</accession>
<sequence>MASMALRRLASRNLVSGGIFRPLSVSRSFNTNAQMGRVDHDHELDDRSNRAPISRRGDFPASFFSDVFDPFRATRSVGQLMNLMDQLMENPFMAASRGSGRAMRRGWDVREDEEALELKVDMPGLAKEDVKVSVEDNTLIIKSEAEKETEEEEQRRRYSSRIELTPNLYKIDGIKAEMKNGVLKVTVPKIKEEEKKDVFQVMVD</sequence>
<dbReference type="EMBL" id="X15333">
    <property type="protein sequence ID" value="CAA33388.1"/>
    <property type="molecule type" value="mRNA"/>
</dbReference>
<dbReference type="PIR" id="S04843">
    <property type="entry name" value="S04843"/>
</dbReference>
<dbReference type="SMR" id="P11890"/>
<dbReference type="GO" id="GO:0009570">
    <property type="term" value="C:chloroplast stroma"/>
    <property type="evidence" value="ECO:0007669"/>
    <property type="project" value="UniProtKB-SubCell"/>
</dbReference>
<dbReference type="CDD" id="cd06464">
    <property type="entry name" value="ACD_sHsps-like"/>
    <property type="match status" value="1"/>
</dbReference>
<dbReference type="Gene3D" id="2.60.40.790">
    <property type="match status" value="1"/>
</dbReference>
<dbReference type="InterPro" id="IPR002068">
    <property type="entry name" value="A-crystallin/Hsp20_dom"/>
</dbReference>
<dbReference type="InterPro" id="IPR044656">
    <property type="entry name" value="HSP14.7/HSP23.5/HSP23.6-like"/>
</dbReference>
<dbReference type="InterPro" id="IPR008978">
    <property type="entry name" value="HSP20-like_chaperone"/>
</dbReference>
<dbReference type="PANTHER" id="PTHR46991">
    <property type="entry name" value="23.5 KDA HEAT SHOCK PROTEIN, MITOCHONDRIAL"/>
    <property type="match status" value="1"/>
</dbReference>
<dbReference type="PANTHER" id="PTHR46991:SF11">
    <property type="entry name" value="SMALL HEAT SHOCK PROTEIN HSPF"/>
    <property type="match status" value="1"/>
</dbReference>
<dbReference type="Pfam" id="PF00011">
    <property type="entry name" value="HSP20"/>
    <property type="match status" value="1"/>
</dbReference>
<dbReference type="SUPFAM" id="SSF49764">
    <property type="entry name" value="HSP20-like chaperones"/>
    <property type="match status" value="1"/>
</dbReference>
<dbReference type="PROSITE" id="PS01031">
    <property type="entry name" value="SHSP"/>
    <property type="match status" value="1"/>
</dbReference>
<protein>
    <recommendedName>
        <fullName>Small heat shock protein, chloroplastic</fullName>
    </recommendedName>
</protein>
<keyword id="KW-0150">Chloroplast</keyword>
<keyword id="KW-0934">Plastid</keyword>
<keyword id="KW-0346">Stress response</keyword>
<keyword id="KW-0809">Transit peptide</keyword>
<organism>
    <name type="scientific">Oxybasis rubra</name>
    <name type="common">Red goosefoot</name>
    <name type="synonym">Chenopodium rubrum</name>
    <dbReference type="NCBI Taxonomy" id="3560"/>
    <lineage>
        <taxon>Eukaryota</taxon>
        <taxon>Viridiplantae</taxon>
        <taxon>Streptophyta</taxon>
        <taxon>Embryophyta</taxon>
        <taxon>Tracheophyta</taxon>
        <taxon>Spermatophyta</taxon>
        <taxon>Magnoliopsida</taxon>
        <taxon>eudicotyledons</taxon>
        <taxon>Gunneridae</taxon>
        <taxon>Pentapetalae</taxon>
        <taxon>Caryophyllales</taxon>
        <taxon>Chenopodiaceae</taxon>
        <taxon>Chenopodioideae</taxon>
        <taxon>Atripliceae</taxon>
        <taxon>Oxybasis</taxon>
    </lineage>
</organism>
<proteinExistence type="evidence at transcript level"/>